<protein>
    <recommendedName>
        <fullName evidence="1">Porphobilinogen deaminase</fullName>
        <shortName evidence="1">PBG</shortName>
        <ecNumber evidence="1">2.5.1.61</ecNumber>
    </recommendedName>
    <alternativeName>
        <fullName evidence="1">Hydroxymethylbilane synthase</fullName>
        <shortName evidence="1">HMBS</shortName>
    </alternativeName>
    <alternativeName>
        <fullName evidence="1">Pre-uroporphyrinogen synthase</fullName>
    </alternativeName>
</protein>
<evidence type="ECO:0000255" key="1">
    <source>
        <dbReference type="HAMAP-Rule" id="MF_00260"/>
    </source>
</evidence>
<dbReference type="EC" id="2.5.1.61" evidence="1"/>
<dbReference type="EMBL" id="CP001601">
    <property type="protein sequence ID" value="ACP31898.1"/>
    <property type="molecule type" value="Genomic_DNA"/>
</dbReference>
<dbReference type="RefSeq" id="WP_010189810.1">
    <property type="nucleotide sequence ID" value="NC_012590.1"/>
</dbReference>
<dbReference type="SMR" id="C3PKG2"/>
<dbReference type="STRING" id="548476.cauri_0299"/>
<dbReference type="GeneID" id="31922918"/>
<dbReference type="KEGG" id="car:cauri_0299"/>
<dbReference type="eggNOG" id="COG0181">
    <property type="taxonomic scope" value="Bacteria"/>
</dbReference>
<dbReference type="HOGENOM" id="CLU_019704_1_0_11"/>
<dbReference type="OrthoDB" id="9810298at2"/>
<dbReference type="UniPathway" id="UPA00251">
    <property type="reaction ID" value="UER00319"/>
</dbReference>
<dbReference type="Proteomes" id="UP000002077">
    <property type="component" value="Chromosome"/>
</dbReference>
<dbReference type="GO" id="GO:0005737">
    <property type="term" value="C:cytoplasm"/>
    <property type="evidence" value="ECO:0007669"/>
    <property type="project" value="TreeGrafter"/>
</dbReference>
<dbReference type="GO" id="GO:0004418">
    <property type="term" value="F:hydroxymethylbilane synthase activity"/>
    <property type="evidence" value="ECO:0007669"/>
    <property type="project" value="UniProtKB-UniRule"/>
</dbReference>
<dbReference type="GO" id="GO:0006782">
    <property type="term" value="P:protoporphyrinogen IX biosynthetic process"/>
    <property type="evidence" value="ECO:0007669"/>
    <property type="project" value="UniProtKB-UniRule"/>
</dbReference>
<dbReference type="FunFam" id="3.40.190.10:FF:000005">
    <property type="entry name" value="Porphobilinogen deaminase"/>
    <property type="match status" value="1"/>
</dbReference>
<dbReference type="Gene3D" id="3.40.190.10">
    <property type="entry name" value="Periplasmic binding protein-like II"/>
    <property type="match status" value="2"/>
</dbReference>
<dbReference type="Gene3D" id="3.30.160.40">
    <property type="entry name" value="Porphobilinogen deaminase, C-terminal domain"/>
    <property type="match status" value="1"/>
</dbReference>
<dbReference type="HAMAP" id="MF_00260">
    <property type="entry name" value="Porphobil_deam"/>
    <property type="match status" value="1"/>
</dbReference>
<dbReference type="InterPro" id="IPR000860">
    <property type="entry name" value="HemC"/>
</dbReference>
<dbReference type="InterPro" id="IPR022419">
    <property type="entry name" value="Porphobilin_deaminase_cofac_BS"/>
</dbReference>
<dbReference type="InterPro" id="IPR022417">
    <property type="entry name" value="Porphobilin_deaminase_N"/>
</dbReference>
<dbReference type="InterPro" id="IPR022418">
    <property type="entry name" value="Porphobilinogen_deaminase_C"/>
</dbReference>
<dbReference type="InterPro" id="IPR036803">
    <property type="entry name" value="Porphobilinogen_deaminase_C_sf"/>
</dbReference>
<dbReference type="NCBIfam" id="TIGR00212">
    <property type="entry name" value="hemC"/>
    <property type="match status" value="1"/>
</dbReference>
<dbReference type="PANTHER" id="PTHR11557">
    <property type="entry name" value="PORPHOBILINOGEN DEAMINASE"/>
    <property type="match status" value="1"/>
</dbReference>
<dbReference type="PANTHER" id="PTHR11557:SF0">
    <property type="entry name" value="PORPHOBILINOGEN DEAMINASE"/>
    <property type="match status" value="1"/>
</dbReference>
<dbReference type="Pfam" id="PF01379">
    <property type="entry name" value="Porphobil_deam"/>
    <property type="match status" value="1"/>
</dbReference>
<dbReference type="Pfam" id="PF03900">
    <property type="entry name" value="Porphobil_deamC"/>
    <property type="match status" value="1"/>
</dbReference>
<dbReference type="PIRSF" id="PIRSF001438">
    <property type="entry name" value="4pyrrol_synth_OHMeBilane_synth"/>
    <property type="match status" value="1"/>
</dbReference>
<dbReference type="PRINTS" id="PR00151">
    <property type="entry name" value="PORPHBDMNASE"/>
</dbReference>
<dbReference type="SUPFAM" id="SSF53850">
    <property type="entry name" value="Periplasmic binding protein-like II"/>
    <property type="match status" value="1"/>
</dbReference>
<dbReference type="SUPFAM" id="SSF54782">
    <property type="entry name" value="Porphobilinogen deaminase (hydroxymethylbilane synthase), C-terminal domain"/>
    <property type="match status" value="1"/>
</dbReference>
<dbReference type="PROSITE" id="PS00533">
    <property type="entry name" value="PORPHOBILINOGEN_DEAM"/>
    <property type="match status" value="1"/>
</dbReference>
<proteinExistence type="inferred from homology"/>
<sequence>MLKIGTRGSLLATTQSGHVQEWLQQKGYEAELHIVTTQGDVNMAPVERIGVGVFTQALREAVDRGECEIAVHSFKDLPTAADERFDLVVPQRQDVREALIARDGLTLKELPEGARVGTSAPRRISQLRAMRPDLDIRPLRGNIDTRMGKVTSGELDAVLLAYAGLVRAGYAERATEVFDPEVFMPAPAQGALAIEAVKGTEAAKAIALLADGPATAATRAERTVLSQLEAGCTAPVAATSHWEGEQLVVRGGVFALDGSRQLIAQAQGAASEAEELGRAVSKELFAQGAADVLAAE</sequence>
<name>HEM3_CORA7</name>
<feature type="chain" id="PRO_1000125667" description="Porphobilinogen deaminase">
    <location>
        <begin position="1"/>
        <end position="296"/>
    </location>
</feature>
<feature type="modified residue" description="S-(dipyrrolylmethanemethyl)cysteine" evidence="1">
    <location>
        <position position="232"/>
    </location>
</feature>
<organism>
    <name type="scientific">Corynebacterium aurimucosum (strain ATCC 700975 / DSM 44827 / CIP 107346 / CN-1)</name>
    <name type="common">Corynebacterium nigricans</name>
    <dbReference type="NCBI Taxonomy" id="548476"/>
    <lineage>
        <taxon>Bacteria</taxon>
        <taxon>Bacillati</taxon>
        <taxon>Actinomycetota</taxon>
        <taxon>Actinomycetes</taxon>
        <taxon>Mycobacteriales</taxon>
        <taxon>Corynebacteriaceae</taxon>
        <taxon>Corynebacterium</taxon>
    </lineage>
</organism>
<accession>C3PKG2</accession>
<gene>
    <name evidence="1" type="primary">hemC</name>
    <name type="ordered locus">cauri_0299</name>
</gene>
<keyword id="KW-0627">Porphyrin biosynthesis</keyword>
<keyword id="KW-1185">Reference proteome</keyword>
<keyword id="KW-0808">Transferase</keyword>
<comment type="function">
    <text evidence="1">Tetrapolymerization of the monopyrrole PBG into the hydroxymethylbilane pre-uroporphyrinogen in several discrete steps.</text>
</comment>
<comment type="catalytic activity">
    <reaction evidence="1">
        <text>4 porphobilinogen + H2O = hydroxymethylbilane + 4 NH4(+)</text>
        <dbReference type="Rhea" id="RHEA:13185"/>
        <dbReference type="ChEBI" id="CHEBI:15377"/>
        <dbReference type="ChEBI" id="CHEBI:28938"/>
        <dbReference type="ChEBI" id="CHEBI:57845"/>
        <dbReference type="ChEBI" id="CHEBI:58126"/>
        <dbReference type="EC" id="2.5.1.61"/>
    </reaction>
</comment>
<comment type="cofactor">
    <cofactor evidence="1">
        <name>dipyrromethane</name>
        <dbReference type="ChEBI" id="CHEBI:60342"/>
    </cofactor>
    <text evidence="1">Binds 1 dipyrromethane group covalently.</text>
</comment>
<comment type="pathway">
    <text evidence="1">Porphyrin-containing compound metabolism; protoporphyrin-IX biosynthesis; coproporphyrinogen-III from 5-aminolevulinate: step 2/4.</text>
</comment>
<comment type="subunit">
    <text evidence="1">Monomer.</text>
</comment>
<comment type="miscellaneous">
    <text evidence="1">The porphobilinogen subunits are added to the dipyrromethane group.</text>
</comment>
<comment type="similarity">
    <text evidence="1">Belongs to the HMBS family.</text>
</comment>
<reference key="1">
    <citation type="journal article" date="2010" name="BMC Genomics">
        <title>Complete genome sequence and lifestyle of black-pigmented Corynebacterium aurimucosum ATCC 700975 (formerly C. nigricans CN-1) isolated from a vaginal swab of a woman with spontaneous abortion.</title>
        <authorList>
            <person name="Trost E."/>
            <person name="Gotker S."/>
            <person name="Schneider J."/>
            <person name="Schneiker-Bekel S."/>
            <person name="Szczepanowski R."/>
            <person name="Tilker A."/>
            <person name="Viehoever P."/>
            <person name="Arnold W."/>
            <person name="Bekel T."/>
            <person name="Blom J."/>
            <person name="Gartemann K.H."/>
            <person name="Linke B."/>
            <person name="Goesmann A."/>
            <person name="Puhler A."/>
            <person name="Shukla S.K."/>
            <person name="Tauch A."/>
        </authorList>
    </citation>
    <scope>NUCLEOTIDE SEQUENCE [LARGE SCALE GENOMIC DNA]</scope>
    <source>
        <strain>ATCC 700975 / DSM 44827 / CIP 107346 / CN-1</strain>
    </source>
</reference>